<reference key="1">
    <citation type="journal article" date="2007" name="Genome Biol.">
        <title>Characterization and modeling of the Haemophilus influenzae core and supragenomes based on the complete genomic sequences of Rd and 12 clinical nontypeable strains.</title>
        <authorList>
            <person name="Hogg J.S."/>
            <person name="Hu F.Z."/>
            <person name="Janto B."/>
            <person name="Boissy R."/>
            <person name="Hayes J."/>
            <person name="Keefe R."/>
            <person name="Post J.C."/>
            <person name="Ehrlich G.D."/>
        </authorList>
    </citation>
    <scope>NUCLEOTIDE SEQUENCE [LARGE SCALE GENOMIC DNA]</scope>
    <source>
        <strain>PittEE</strain>
    </source>
</reference>
<name>SECA_HAEIE</name>
<comment type="function">
    <text evidence="1">Part of the Sec protein translocase complex. Interacts with the SecYEG preprotein conducting channel. Has a central role in coupling the hydrolysis of ATP to the transfer of proteins into and across the cell membrane, serving both as a receptor for the preprotein-SecB complex and as an ATP-driven molecular motor driving the stepwise translocation of polypeptide chains across the membrane.</text>
</comment>
<comment type="catalytic activity">
    <reaction evidence="1">
        <text>ATP + H2O + cellular proteinSide 1 = ADP + phosphate + cellular proteinSide 2.</text>
        <dbReference type="EC" id="7.4.2.8"/>
    </reaction>
</comment>
<comment type="cofactor">
    <cofactor evidence="1">
        <name>Zn(2+)</name>
        <dbReference type="ChEBI" id="CHEBI:29105"/>
    </cofactor>
    <text evidence="1">May bind 1 zinc ion per subunit.</text>
</comment>
<comment type="subunit">
    <text evidence="1">Monomer and homodimer. Part of the essential Sec protein translocation apparatus which comprises SecA, SecYEG and auxiliary proteins SecDF-YajC and YidC.</text>
</comment>
<comment type="subcellular location">
    <subcellularLocation>
        <location evidence="1">Cell inner membrane</location>
        <topology evidence="1">Peripheral membrane protein</topology>
        <orientation evidence="1">Cytoplasmic side</orientation>
    </subcellularLocation>
    <subcellularLocation>
        <location evidence="1">Cytoplasm</location>
    </subcellularLocation>
    <text evidence="1">Distribution is 50-50.</text>
</comment>
<comment type="similarity">
    <text evidence="1">Belongs to the SecA family.</text>
</comment>
<sequence>MSILTRIFGSRNERVLRKLKKQVVKINKMEPAFEALSDDELKAKTQEFRDRLSGGETLQQILPEAFATVREASKRVLGMRHFDVQLIGGMVLTNRCIAEMRTGEGKTLTATLPCYLIALEGKGVHVVTVNDYLARRDAETNRPLFEFLGMSVGVNIPGLSPEEKREAYAADITYATNSELGFDYLRDNLAHSKEERFQRTLGYALVDEVDSILIDEARTPLIISGQAEKSSELYIAVNKLIPSLIKQEKEDTEEYQGEGDFTLDLKSKQAHLTERGQEKVEDWLIAQGLMPEGDSLYSPSRIVLLHHVMAALRAHTLFEKDVDYIVKDGEIVIVDEHTGRTMAGRRWSDGLHQAIEAKEGVDVKSENQTVASISYQNYFRLYERLAGMTGTADTEAFEFQQIYGLETVVIPTNRPMIRDDRTDVMFENEQYKFNAIIEDIKDCVERQQPVLVGTISVEKSEELSKALDKAGIKHNVLNAKFHQQEAEIVAEAGFPSAVTIATNMAGRGTDIILGGNWKAQAAKLENPTQEQIEALKAEWEKNHEIVMKAGGLHIIGTERHESRRIDNQLRGRSGRQGDPGSSRFYLSLEDGLMRIYLNEGKRNLMRKAFTVAGEAMESKMLAKVIASAQAKVEAFHFDGRKNLLEYDDVANDQRHAIYEQRNYLLDNDDISETINAIRHDVFNGVIDQYIPPQSLEEQWDIKGLEERLSQEFGMELPISNWLEEDNNLHEESLRERIVEIAEKEYKEKEALVGEDAMHHFEKGVMLQTLDELWKEHLASMDYLRQGIHLRGYAQKDPKQEYKKESFRMFTEMLDSLKHHVIMTLTRVRVRTQEEMEEAERARQEMATRINQNNLPVDENSQTTQNSETEDYSDRRIGRNEPCPCGSGKKYKHCHGSRVARQ</sequence>
<gene>
    <name evidence="1" type="primary">secA</name>
    <name type="ordered locus">CGSHiEE_07470</name>
</gene>
<organism>
    <name type="scientific">Haemophilus influenzae (strain PittEE)</name>
    <dbReference type="NCBI Taxonomy" id="374930"/>
    <lineage>
        <taxon>Bacteria</taxon>
        <taxon>Pseudomonadati</taxon>
        <taxon>Pseudomonadota</taxon>
        <taxon>Gammaproteobacteria</taxon>
        <taxon>Pasteurellales</taxon>
        <taxon>Pasteurellaceae</taxon>
        <taxon>Haemophilus</taxon>
    </lineage>
</organism>
<proteinExistence type="inferred from homology"/>
<feature type="chain" id="PRO_1000073473" description="Protein translocase subunit SecA">
    <location>
        <begin position="1"/>
        <end position="901"/>
    </location>
</feature>
<feature type="region of interest" description="Disordered" evidence="2">
    <location>
        <begin position="836"/>
        <end position="901"/>
    </location>
</feature>
<feature type="compositionally biased region" description="Basic and acidic residues" evidence="2">
    <location>
        <begin position="836"/>
        <end position="845"/>
    </location>
</feature>
<feature type="compositionally biased region" description="Polar residues" evidence="2">
    <location>
        <begin position="849"/>
        <end position="866"/>
    </location>
</feature>
<feature type="compositionally biased region" description="Basic residues" evidence="2">
    <location>
        <begin position="888"/>
        <end position="901"/>
    </location>
</feature>
<feature type="binding site" evidence="1">
    <location>
        <position position="85"/>
    </location>
    <ligand>
        <name>ATP</name>
        <dbReference type="ChEBI" id="CHEBI:30616"/>
    </ligand>
</feature>
<feature type="binding site" evidence="1">
    <location>
        <begin position="103"/>
        <end position="107"/>
    </location>
    <ligand>
        <name>ATP</name>
        <dbReference type="ChEBI" id="CHEBI:30616"/>
    </ligand>
</feature>
<feature type="binding site" evidence="1">
    <location>
        <position position="510"/>
    </location>
    <ligand>
        <name>ATP</name>
        <dbReference type="ChEBI" id="CHEBI:30616"/>
    </ligand>
</feature>
<feature type="binding site" evidence="1">
    <location>
        <position position="882"/>
    </location>
    <ligand>
        <name>Zn(2+)</name>
        <dbReference type="ChEBI" id="CHEBI:29105"/>
    </ligand>
</feature>
<feature type="binding site" evidence="1">
    <location>
        <position position="884"/>
    </location>
    <ligand>
        <name>Zn(2+)</name>
        <dbReference type="ChEBI" id="CHEBI:29105"/>
    </ligand>
</feature>
<feature type="binding site" evidence="1">
    <location>
        <position position="893"/>
    </location>
    <ligand>
        <name>Zn(2+)</name>
        <dbReference type="ChEBI" id="CHEBI:29105"/>
    </ligand>
</feature>
<feature type="binding site" evidence="1">
    <location>
        <position position="894"/>
    </location>
    <ligand>
        <name>Zn(2+)</name>
        <dbReference type="ChEBI" id="CHEBI:29105"/>
    </ligand>
</feature>
<protein>
    <recommendedName>
        <fullName evidence="1">Protein translocase subunit SecA</fullName>
        <ecNumber evidence="1">7.4.2.8</ecNumber>
    </recommendedName>
</protein>
<accession>A5UDG6</accession>
<dbReference type="EC" id="7.4.2.8" evidence="1"/>
<dbReference type="EMBL" id="CP000671">
    <property type="protein sequence ID" value="ABQ98817.1"/>
    <property type="molecule type" value="Genomic_DNA"/>
</dbReference>
<dbReference type="SMR" id="A5UDG6"/>
<dbReference type="KEGG" id="hip:CGSHiEE_07470"/>
<dbReference type="HOGENOM" id="CLU_005314_3_0_6"/>
<dbReference type="GO" id="GO:0031522">
    <property type="term" value="C:cell envelope Sec protein transport complex"/>
    <property type="evidence" value="ECO:0007669"/>
    <property type="project" value="TreeGrafter"/>
</dbReference>
<dbReference type="GO" id="GO:0005829">
    <property type="term" value="C:cytosol"/>
    <property type="evidence" value="ECO:0007669"/>
    <property type="project" value="TreeGrafter"/>
</dbReference>
<dbReference type="GO" id="GO:0005886">
    <property type="term" value="C:plasma membrane"/>
    <property type="evidence" value="ECO:0007669"/>
    <property type="project" value="UniProtKB-SubCell"/>
</dbReference>
<dbReference type="GO" id="GO:0005524">
    <property type="term" value="F:ATP binding"/>
    <property type="evidence" value="ECO:0007669"/>
    <property type="project" value="UniProtKB-UniRule"/>
</dbReference>
<dbReference type="GO" id="GO:0046872">
    <property type="term" value="F:metal ion binding"/>
    <property type="evidence" value="ECO:0007669"/>
    <property type="project" value="UniProtKB-KW"/>
</dbReference>
<dbReference type="GO" id="GO:0008564">
    <property type="term" value="F:protein-exporting ATPase activity"/>
    <property type="evidence" value="ECO:0007669"/>
    <property type="project" value="UniProtKB-EC"/>
</dbReference>
<dbReference type="GO" id="GO:0065002">
    <property type="term" value="P:intracellular protein transmembrane transport"/>
    <property type="evidence" value="ECO:0007669"/>
    <property type="project" value="UniProtKB-UniRule"/>
</dbReference>
<dbReference type="GO" id="GO:0017038">
    <property type="term" value="P:protein import"/>
    <property type="evidence" value="ECO:0007669"/>
    <property type="project" value="InterPro"/>
</dbReference>
<dbReference type="GO" id="GO:0006605">
    <property type="term" value="P:protein targeting"/>
    <property type="evidence" value="ECO:0007669"/>
    <property type="project" value="UniProtKB-UniRule"/>
</dbReference>
<dbReference type="GO" id="GO:0043952">
    <property type="term" value="P:protein transport by the Sec complex"/>
    <property type="evidence" value="ECO:0007669"/>
    <property type="project" value="TreeGrafter"/>
</dbReference>
<dbReference type="CDD" id="cd17928">
    <property type="entry name" value="DEXDc_SecA"/>
    <property type="match status" value="1"/>
</dbReference>
<dbReference type="CDD" id="cd18803">
    <property type="entry name" value="SF2_C_secA"/>
    <property type="match status" value="1"/>
</dbReference>
<dbReference type="FunFam" id="1.10.3060.10:FF:000001">
    <property type="entry name" value="Preprotein translocase subunit SecA"/>
    <property type="match status" value="1"/>
</dbReference>
<dbReference type="FunFam" id="3.40.50.300:FF:000113">
    <property type="entry name" value="Preprotein translocase subunit SecA"/>
    <property type="match status" value="1"/>
</dbReference>
<dbReference type="FunFam" id="3.90.1440.10:FF:000001">
    <property type="entry name" value="Preprotein translocase subunit SecA"/>
    <property type="match status" value="1"/>
</dbReference>
<dbReference type="Gene3D" id="1.10.3060.10">
    <property type="entry name" value="Helical scaffold and wing domains of SecA"/>
    <property type="match status" value="1"/>
</dbReference>
<dbReference type="Gene3D" id="3.40.50.300">
    <property type="entry name" value="P-loop containing nucleotide triphosphate hydrolases"/>
    <property type="match status" value="2"/>
</dbReference>
<dbReference type="Gene3D" id="3.90.1440.10">
    <property type="entry name" value="SecA, preprotein cross-linking domain"/>
    <property type="match status" value="1"/>
</dbReference>
<dbReference type="HAMAP" id="MF_01382">
    <property type="entry name" value="SecA"/>
    <property type="match status" value="1"/>
</dbReference>
<dbReference type="InterPro" id="IPR014001">
    <property type="entry name" value="Helicase_ATP-bd"/>
</dbReference>
<dbReference type="InterPro" id="IPR001650">
    <property type="entry name" value="Helicase_C-like"/>
</dbReference>
<dbReference type="InterPro" id="IPR027417">
    <property type="entry name" value="P-loop_NTPase"/>
</dbReference>
<dbReference type="InterPro" id="IPR004027">
    <property type="entry name" value="SEC_C_motif"/>
</dbReference>
<dbReference type="InterPro" id="IPR000185">
    <property type="entry name" value="SecA"/>
</dbReference>
<dbReference type="InterPro" id="IPR020937">
    <property type="entry name" value="SecA_CS"/>
</dbReference>
<dbReference type="InterPro" id="IPR011115">
    <property type="entry name" value="SecA_DEAD"/>
</dbReference>
<dbReference type="InterPro" id="IPR014018">
    <property type="entry name" value="SecA_motor_DEAD"/>
</dbReference>
<dbReference type="InterPro" id="IPR011130">
    <property type="entry name" value="SecA_preprotein_X-link_dom"/>
</dbReference>
<dbReference type="InterPro" id="IPR044722">
    <property type="entry name" value="SecA_SF2_C"/>
</dbReference>
<dbReference type="InterPro" id="IPR011116">
    <property type="entry name" value="SecA_Wing/Scaffold"/>
</dbReference>
<dbReference type="InterPro" id="IPR036266">
    <property type="entry name" value="SecA_Wing/Scaffold_sf"/>
</dbReference>
<dbReference type="InterPro" id="IPR036670">
    <property type="entry name" value="SecA_X-link_sf"/>
</dbReference>
<dbReference type="NCBIfam" id="NF009538">
    <property type="entry name" value="PRK12904.1"/>
    <property type="match status" value="1"/>
</dbReference>
<dbReference type="NCBIfam" id="TIGR00963">
    <property type="entry name" value="secA"/>
    <property type="match status" value="1"/>
</dbReference>
<dbReference type="PANTHER" id="PTHR30612:SF0">
    <property type="entry name" value="CHLOROPLAST PROTEIN-TRANSPORTING ATPASE"/>
    <property type="match status" value="1"/>
</dbReference>
<dbReference type="PANTHER" id="PTHR30612">
    <property type="entry name" value="SECA INNER MEMBRANE COMPONENT OF SEC PROTEIN SECRETION SYSTEM"/>
    <property type="match status" value="1"/>
</dbReference>
<dbReference type="Pfam" id="PF21090">
    <property type="entry name" value="P-loop_SecA"/>
    <property type="match status" value="1"/>
</dbReference>
<dbReference type="Pfam" id="PF02810">
    <property type="entry name" value="SEC-C"/>
    <property type="match status" value="1"/>
</dbReference>
<dbReference type="Pfam" id="PF07517">
    <property type="entry name" value="SecA_DEAD"/>
    <property type="match status" value="1"/>
</dbReference>
<dbReference type="Pfam" id="PF01043">
    <property type="entry name" value="SecA_PP_bind"/>
    <property type="match status" value="1"/>
</dbReference>
<dbReference type="Pfam" id="PF07516">
    <property type="entry name" value="SecA_SW"/>
    <property type="match status" value="1"/>
</dbReference>
<dbReference type="PRINTS" id="PR00906">
    <property type="entry name" value="SECA"/>
</dbReference>
<dbReference type="SMART" id="SM00957">
    <property type="entry name" value="SecA_DEAD"/>
    <property type="match status" value="1"/>
</dbReference>
<dbReference type="SMART" id="SM00958">
    <property type="entry name" value="SecA_PP_bind"/>
    <property type="match status" value="1"/>
</dbReference>
<dbReference type="SUPFAM" id="SSF81886">
    <property type="entry name" value="Helical scaffold and wing domains of SecA"/>
    <property type="match status" value="1"/>
</dbReference>
<dbReference type="SUPFAM" id="SSF52540">
    <property type="entry name" value="P-loop containing nucleoside triphosphate hydrolases"/>
    <property type="match status" value="2"/>
</dbReference>
<dbReference type="SUPFAM" id="SSF81767">
    <property type="entry name" value="Pre-protein crosslinking domain of SecA"/>
    <property type="match status" value="1"/>
</dbReference>
<dbReference type="PROSITE" id="PS01312">
    <property type="entry name" value="SECA"/>
    <property type="match status" value="1"/>
</dbReference>
<dbReference type="PROSITE" id="PS51196">
    <property type="entry name" value="SECA_MOTOR_DEAD"/>
    <property type="match status" value="1"/>
</dbReference>
<evidence type="ECO:0000255" key="1">
    <source>
        <dbReference type="HAMAP-Rule" id="MF_01382"/>
    </source>
</evidence>
<evidence type="ECO:0000256" key="2">
    <source>
        <dbReference type="SAM" id="MobiDB-lite"/>
    </source>
</evidence>
<keyword id="KW-0067">ATP-binding</keyword>
<keyword id="KW-0997">Cell inner membrane</keyword>
<keyword id="KW-1003">Cell membrane</keyword>
<keyword id="KW-0963">Cytoplasm</keyword>
<keyword id="KW-0472">Membrane</keyword>
<keyword id="KW-0479">Metal-binding</keyword>
<keyword id="KW-0547">Nucleotide-binding</keyword>
<keyword id="KW-0653">Protein transport</keyword>
<keyword id="KW-1278">Translocase</keyword>
<keyword id="KW-0811">Translocation</keyword>
<keyword id="KW-0813">Transport</keyword>
<keyword id="KW-0862">Zinc</keyword>